<evidence type="ECO:0000250" key="1">
    <source>
        <dbReference type="UniProtKB" id="P02086"/>
    </source>
</evidence>
<evidence type="ECO:0000250" key="2">
    <source>
        <dbReference type="UniProtKB" id="P68871"/>
    </source>
</evidence>
<evidence type="ECO:0000250" key="3">
    <source>
        <dbReference type="UniProtKB" id="P80044"/>
    </source>
</evidence>
<evidence type="ECO:0000255" key="4">
    <source>
        <dbReference type="PROSITE-ProRule" id="PRU00238"/>
    </source>
</evidence>
<evidence type="ECO:0000269" key="5">
    <source>
    </source>
</evidence>
<evidence type="ECO:0007744" key="6">
    <source>
        <dbReference type="PDB" id="1G0B"/>
    </source>
</evidence>
<evidence type="ECO:0007744" key="7">
    <source>
        <dbReference type="PDB" id="1IBE"/>
    </source>
</evidence>
<evidence type="ECO:0007744" key="8">
    <source>
        <dbReference type="PDB" id="1IWH"/>
    </source>
</evidence>
<evidence type="ECO:0007744" key="9">
    <source>
        <dbReference type="PDB" id="1NS6"/>
    </source>
</evidence>
<evidence type="ECO:0007744" key="10">
    <source>
        <dbReference type="PDB" id="1NS9"/>
    </source>
</evidence>
<evidence type="ECO:0007744" key="11">
    <source>
        <dbReference type="PDB" id="1Y8H"/>
    </source>
</evidence>
<evidence type="ECO:0007744" key="12">
    <source>
        <dbReference type="PDB" id="1Y8I"/>
    </source>
</evidence>
<evidence type="ECO:0007744" key="13">
    <source>
        <dbReference type="PDB" id="1Y8K"/>
    </source>
</evidence>
<evidence type="ECO:0007744" key="14">
    <source>
        <dbReference type="PDB" id="2D5X"/>
    </source>
</evidence>
<evidence type="ECO:0007744" key="15">
    <source>
        <dbReference type="PDB" id="2DHB"/>
    </source>
</evidence>
<evidence type="ECO:0007744" key="16">
    <source>
        <dbReference type="PDB" id="2MHB"/>
    </source>
</evidence>
<evidence type="ECO:0007744" key="17">
    <source>
        <dbReference type="PDB" id="2ZLT"/>
    </source>
</evidence>
<evidence type="ECO:0007744" key="18">
    <source>
        <dbReference type="PDB" id="2ZLU"/>
    </source>
</evidence>
<evidence type="ECO:0007744" key="19">
    <source>
        <dbReference type="PDB" id="2ZLV"/>
    </source>
</evidence>
<evidence type="ECO:0007744" key="20">
    <source>
        <dbReference type="PDB" id="2ZLW"/>
    </source>
</evidence>
<evidence type="ECO:0007744" key="21">
    <source>
        <dbReference type="PDB" id="2ZLX"/>
    </source>
</evidence>
<evidence type="ECO:0007829" key="22">
    <source>
        <dbReference type="PDB" id="2D5X"/>
    </source>
</evidence>
<gene>
    <name type="primary">HBB</name>
</gene>
<keyword id="KW-0002">3D-structure</keyword>
<keyword id="KW-0007">Acetylation</keyword>
<keyword id="KW-0903">Direct protein sequencing</keyword>
<keyword id="KW-0349">Heme</keyword>
<keyword id="KW-0408">Iron</keyword>
<keyword id="KW-0479">Metal-binding</keyword>
<keyword id="KW-0561">Oxygen transport</keyword>
<keyword id="KW-0597">Phosphoprotein</keyword>
<keyword id="KW-1185">Reference proteome</keyword>
<keyword id="KW-0702">S-nitrosylation</keyword>
<keyword id="KW-0813">Transport</keyword>
<name>HBB_HORSE</name>
<comment type="function">
    <text>Involved in oxygen transport from the lung to the various peripheral tissues.</text>
</comment>
<comment type="subunit">
    <text>Heterotetramer of two alpha chains and two beta chains.</text>
</comment>
<comment type="tissue specificity">
    <text>Red blood cells.</text>
</comment>
<comment type="similarity">
    <text evidence="4">Belongs to the globin family.</text>
</comment>
<comment type="online information" name="Protein Spotlight">
    <link uri="https://www.proteinspotlight.org/back_issues/021"/>
    <text>The man behind the molecular lung - Issue 21 of April 2002</text>
</comment>
<sequence length="146" mass="16008">VQLSGEEKAAVLALWDKVNEEEVGGEALGRLLVVYPWTQRFFDSFGDLSNPGAVMGNPKVKAHGKKVLHSFGEGVHHLDNLKGTFAALSELHCDKLHVDPENFRLLGNVLVVVLARHFGKDFTPELQASYQKVVAGVANALAHKYH</sequence>
<protein>
    <recommendedName>
        <fullName>Hemoglobin subunit beta</fullName>
    </recommendedName>
    <alternativeName>
        <fullName>Beta-globin</fullName>
    </alternativeName>
    <alternativeName>
        <fullName>Hemoglobin beta chain</fullName>
    </alternativeName>
</protein>
<proteinExistence type="evidence at protein level"/>
<reference key="1">
    <citation type="journal article" date="1980" name="Hoppe-Seyler's Z. Physiol. Chem.">
        <title>Hemoglobins, XXXIII. Note on the sequence of the hemoglobins of the horse.</title>
        <authorList>
            <person name="Matsuda G."/>
            <person name="Maita T."/>
            <person name="Braunitzer G."/>
            <person name="Schrank B."/>
        </authorList>
    </citation>
    <scope>PROTEIN SEQUENCE</scope>
</reference>
<reference key="2">
    <citation type="journal article" date="1968" name="Can. J. Biochem.">
        <title>Amino acid sequences of some tryptic peptides from the beta-chain of horse hemoglobin.</title>
        <authorList>
            <person name="Smith D.B."/>
        </authorList>
    </citation>
    <scope>PROTEIN SEQUENCE OF 1-82 AND 117-146</scope>
</reference>
<reference key="3">
    <citation type="journal article" date="1970" name="Can. J. Biochem.">
        <title>Amide groups of some tryptic peptides from the beta-chain of horse hemoglobin.</title>
        <authorList>
            <person name="Smith D.B."/>
            <person name="Chung W.P."/>
        </authorList>
    </citation>
    <scope>DETERMINATION OF AMIDES</scope>
    <scope>PROTEIN SEQUENCE OF 52-54</scope>
</reference>
<reference key="4">
    <citation type="journal article" date="1968" name="Nature">
        <title>Three-dimensional Fourier synthesis of horse oxyhaemoglobin at 2.8-A resolution: (1) X-ray analysis.</title>
        <authorList>
            <person name="Perutz M.F."/>
            <person name="Miurhead H."/>
            <person name="Cox J.M."/>
            <person name="Goaman L.C."/>
            <person name="Mathews F.S."/>
            <person name="McGandy E.L."/>
            <person name="Webb L.E."/>
        </authorList>
    </citation>
    <scope>X-RAY CRYSTALLOGRAPHY (2.8 ANGSTROMS)</scope>
</reference>
<reference key="5">
    <citation type="journal article" date="1968" name="Nature">
        <title>Three-dimensional Fourier synthesis of horse oxyhaemoglobin at 2.8 A resolution: the atomic model.</title>
        <authorList>
            <person name="Perutz M.F."/>
            <person name="Muirhead H."/>
            <person name="Cox J.M."/>
            <person name="Goaman L.C."/>
        </authorList>
    </citation>
    <scope>X-RAY CRYSTALLOGRAPHY (2.8 ANGSTROMS)</scope>
</reference>
<reference key="6">
    <citation type="journal article" date="1977" name="J. Mol. Biol.">
        <title>The structure of horse methaemoglobin at 2.0-A resolution.</title>
        <authorList>
            <person name="Ladner R.C."/>
            <person name="Heidner E.J."/>
            <person name="Perutz M.F."/>
        </authorList>
    </citation>
    <scope>X-RAY CRYSTALLOGRAPHY (2.00 ANGSTROMS) IN COMPLEX WITH HEME</scope>
</reference>
<feature type="chain" id="PRO_0000052975" description="Hemoglobin subunit beta">
    <location>
        <begin position="1"/>
        <end position="146"/>
    </location>
</feature>
<feature type="domain" description="Globin" evidence="4">
    <location>
        <begin position="2"/>
        <end position="146"/>
    </location>
</feature>
<feature type="binding site" description="distal binding residue" evidence="3">
    <location>
        <position position="63"/>
    </location>
    <ligand>
        <name>heme b</name>
        <dbReference type="ChEBI" id="CHEBI:60344"/>
    </ligand>
    <ligandPart>
        <name>Fe</name>
        <dbReference type="ChEBI" id="CHEBI:18248"/>
    </ligandPart>
</feature>
<feature type="binding site" description="proximal binding residue" evidence="5 6 7 8 9 10 11 12 13 14 15 16 17 18 19 20 21">
    <location>
        <position position="92"/>
    </location>
    <ligand>
        <name>heme b</name>
        <dbReference type="ChEBI" id="CHEBI:60344"/>
    </ligand>
    <ligandPart>
        <name>Fe</name>
        <dbReference type="ChEBI" id="CHEBI:18248"/>
    </ligandPart>
</feature>
<feature type="modified residue" description="N-acetylvaline" evidence="1">
    <location>
        <position position="1"/>
    </location>
</feature>
<feature type="modified residue" description="Phosphoserine" evidence="2">
    <location>
        <position position="44"/>
    </location>
</feature>
<feature type="modified residue" description="N6-acetyllysine" evidence="2">
    <location>
        <position position="59"/>
    </location>
</feature>
<feature type="modified residue" description="N6-acetyllysine" evidence="2">
    <location>
        <position position="82"/>
    </location>
</feature>
<feature type="modified residue" description="S-nitrosocysteine" evidence="2">
    <location>
        <position position="93"/>
    </location>
</feature>
<feature type="modified residue" description="N6-acetyllysine" evidence="2">
    <location>
        <position position="144"/>
    </location>
</feature>
<feature type="helix" evidence="22">
    <location>
        <begin position="5"/>
        <end position="15"/>
    </location>
</feature>
<feature type="helix" evidence="22">
    <location>
        <begin position="20"/>
        <end position="34"/>
    </location>
</feature>
<feature type="helix" evidence="22">
    <location>
        <begin position="36"/>
        <end position="45"/>
    </location>
</feature>
<feature type="helix" evidence="22">
    <location>
        <begin position="51"/>
        <end position="56"/>
    </location>
</feature>
<feature type="helix" evidence="22">
    <location>
        <begin position="58"/>
        <end position="75"/>
    </location>
</feature>
<feature type="helix" evidence="22">
    <location>
        <begin position="76"/>
        <end position="80"/>
    </location>
</feature>
<feature type="helix" evidence="22">
    <location>
        <begin position="81"/>
        <end position="94"/>
    </location>
</feature>
<feature type="helix" evidence="22">
    <location>
        <begin position="101"/>
        <end position="118"/>
    </location>
</feature>
<feature type="helix" evidence="22">
    <location>
        <begin position="119"/>
        <end position="121"/>
    </location>
</feature>
<feature type="helix" evidence="22">
    <location>
        <begin position="124"/>
        <end position="141"/>
    </location>
</feature>
<feature type="helix" evidence="22">
    <location>
        <begin position="143"/>
        <end position="145"/>
    </location>
</feature>
<organism>
    <name type="scientific">Equus caballus</name>
    <name type="common">Horse</name>
    <dbReference type="NCBI Taxonomy" id="9796"/>
    <lineage>
        <taxon>Eukaryota</taxon>
        <taxon>Metazoa</taxon>
        <taxon>Chordata</taxon>
        <taxon>Craniata</taxon>
        <taxon>Vertebrata</taxon>
        <taxon>Euteleostomi</taxon>
        <taxon>Mammalia</taxon>
        <taxon>Eutheria</taxon>
        <taxon>Laurasiatheria</taxon>
        <taxon>Perissodactyla</taxon>
        <taxon>Equidae</taxon>
        <taxon>Equus</taxon>
    </lineage>
</organism>
<accession>P02062</accession>
<dbReference type="PIR" id="B91688">
    <property type="entry name" value="HBHO"/>
</dbReference>
<dbReference type="PDB" id="1G0B">
    <property type="method" value="X-ray"/>
    <property type="resolution" value="1.90 A"/>
    <property type="chains" value="B=1-146"/>
</dbReference>
<dbReference type="PDB" id="1IBE">
    <property type="method" value="X-ray"/>
    <property type="resolution" value="1.80 A"/>
    <property type="chains" value="B=1-146"/>
</dbReference>
<dbReference type="PDB" id="1IWH">
    <property type="method" value="X-ray"/>
    <property type="resolution" value="1.55 A"/>
    <property type="chains" value="B=1-146"/>
</dbReference>
<dbReference type="PDB" id="1NS6">
    <property type="method" value="X-ray"/>
    <property type="resolution" value="2.05 A"/>
    <property type="chains" value="B=1-146"/>
</dbReference>
<dbReference type="PDB" id="1NS9">
    <property type="method" value="X-ray"/>
    <property type="resolution" value="1.60 A"/>
    <property type="chains" value="B=1-146"/>
</dbReference>
<dbReference type="PDB" id="1Y8H">
    <property type="method" value="X-ray"/>
    <property type="resolution" value="3.10 A"/>
    <property type="chains" value="B/D=1-146"/>
</dbReference>
<dbReference type="PDB" id="1Y8I">
    <property type="method" value="X-ray"/>
    <property type="resolution" value="2.60 A"/>
    <property type="chains" value="B/D=1-146"/>
</dbReference>
<dbReference type="PDB" id="1Y8K">
    <property type="method" value="X-ray"/>
    <property type="resolution" value="2.30 A"/>
    <property type="chains" value="B/D=1-146"/>
</dbReference>
<dbReference type="PDB" id="2D5X">
    <property type="method" value="X-ray"/>
    <property type="resolution" value="1.45 A"/>
    <property type="chains" value="B=1-146"/>
</dbReference>
<dbReference type="PDB" id="2DHB">
    <property type="method" value="X-ray"/>
    <property type="resolution" value="2.80 A"/>
    <property type="chains" value="B=1-146"/>
</dbReference>
<dbReference type="PDB" id="2MHB">
    <property type="method" value="X-ray"/>
    <property type="resolution" value="2.00 A"/>
    <property type="chains" value="B=1-146"/>
</dbReference>
<dbReference type="PDB" id="2ZLT">
    <property type="method" value="X-ray"/>
    <property type="resolution" value="1.90 A"/>
    <property type="chains" value="B=1-146"/>
</dbReference>
<dbReference type="PDB" id="2ZLU">
    <property type="method" value="X-ray"/>
    <property type="resolution" value="2.00 A"/>
    <property type="chains" value="B=1-146"/>
</dbReference>
<dbReference type="PDB" id="2ZLV">
    <property type="method" value="X-ray"/>
    <property type="resolution" value="2.00 A"/>
    <property type="chains" value="B=1-146"/>
</dbReference>
<dbReference type="PDB" id="2ZLW">
    <property type="method" value="X-ray"/>
    <property type="resolution" value="2.90 A"/>
    <property type="chains" value="B/D=1-146"/>
</dbReference>
<dbReference type="PDB" id="2ZLX">
    <property type="method" value="X-ray"/>
    <property type="resolution" value="2.80 A"/>
    <property type="chains" value="B/D=1-146"/>
</dbReference>
<dbReference type="PDB" id="5C6E">
    <property type="method" value="Other"/>
    <property type="resolution" value="1.70 A"/>
    <property type="chains" value="B=1-146"/>
</dbReference>
<dbReference type="PDB" id="6R2O">
    <property type="method" value="X-ray"/>
    <property type="resolution" value="2.46 A"/>
    <property type="chains" value="B/D=1-145"/>
</dbReference>
<dbReference type="PDB" id="6SVA">
    <property type="method" value="X-ray"/>
    <property type="resolution" value="1.92 A"/>
    <property type="chains" value="B=1-146"/>
</dbReference>
<dbReference type="PDB" id="8PUQ">
    <property type="method" value="X-ray"/>
    <property type="resolution" value="1.95 A"/>
    <property type="chains" value="B=1-146"/>
</dbReference>
<dbReference type="PDB" id="8PUR">
    <property type="method" value="X-ray"/>
    <property type="resolution" value="1.85 A"/>
    <property type="chains" value="B=1-146"/>
</dbReference>
<dbReference type="PDBsum" id="1G0B"/>
<dbReference type="PDBsum" id="1IBE"/>
<dbReference type="PDBsum" id="1IWH"/>
<dbReference type="PDBsum" id="1NS6"/>
<dbReference type="PDBsum" id="1NS9"/>
<dbReference type="PDBsum" id="1Y8H"/>
<dbReference type="PDBsum" id="1Y8I"/>
<dbReference type="PDBsum" id="1Y8K"/>
<dbReference type="PDBsum" id="2D5X"/>
<dbReference type="PDBsum" id="2DHB"/>
<dbReference type="PDBsum" id="2MHB"/>
<dbReference type="PDBsum" id="2ZLT"/>
<dbReference type="PDBsum" id="2ZLU"/>
<dbReference type="PDBsum" id="2ZLV"/>
<dbReference type="PDBsum" id="2ZLW"/>
<dbReference type="PDBsum" id="2ZLX"/>
<dbReference type="PDBsum" id="5C6E"/>
<dbReference type="PDBsum" id="6R2O"/>
<dbReference type="PDBsum" id="6SVA"/>
<dbReference type="PDBsum" id="8PUQ"/>
<dbReference type="PDBsum" id="8PUR"/>
<dbReference type="SMR" id="P02062"/>
<dbReference type="FunCoup" id="P02062">
    <property type="interactions" value="172"/>
</dbReference>
<dbReference type="MINT" id="P02062"/>
<dbReference type="STRING" id="9796.ENSECAP00000024476"/>
<dbReference type="PaxDb" id="9796-ENSECAP00000024476"/>
<dbReference type="PeptideAtlas" id="P02062"/>
<dbReference type="HOGENOM" id="CLU_003827_10_0_1"/>
<dbReference type="InParanoid" id="P02062"/>
<dbReference type="EvolutionaryTrace" id="P02062"/>
<dbReference type="Proteomes" id="UP000002281">
    <property type="component" value="Unplaced"/>
</dbReference>
<dbReference type="GO" id="GO:0031838">
    <property type="term" value="C:haptoglobin-hemoglobin complex"/>
    <property type="evidence" value="ECO:0000318"/>
    <property type="project" value="GO_Central"/>
</dbReference>
<dbReference type="GO" id="GO:0005833">
    <property type="term" value="C:hemoglobin complex"/>
    <property type="evidence" value="ECO:0000318"/>
    <property type="project" value="GO_Central"/>
</dbReference>
<dbReference type="GO" id="GO:0020037">
    <property type="term" value="F:heme binding"/>
    <property type="evidence" value="ECO:0000318"/>
    <property type="project" value="GO_Central"/>
</dbReference>
<dbReference type="GO" id="GO:0031721">
    <property type="term" value="F:hemoglobin alpha binding"/>
    <property type="evidence" value="ECO:0000318"/>
    <property type="project" value="GO_Central"/>
</dbReference>
<dbReference type="GO" id="GO:0046872">
    <property type="term" value="F:metal ion binding"/>
    <property type="evidence" value="ECO:0007669"/>
    <property type="project" value="UniProtKB-KW"/>
</dbReference>
<dbReference type="GO" id="GO:0019825">
    <property type="term" value="F:oxygen binding"/>
    <property type="evidence" value="ECO:0000318"/>
    <property type="project" value="GO_Central"/>
</dbReference>
<dbReference type="GO" id="GO:0005344">
    <property type="term" value="F:oxygen carrier activity"/>
    <property type="evidence" value="ECO:0000318"/>
    <property type="project" value="GO_Central"/>
</dbReference>
<dbReference type="GO" id="GO:0098869">
    <property type="term" value="P:cellular oxidant detoxification"/>
    <property type="evidence" value="ECO:0007669"/>
    <property type="project" value="GOC"/>
</dbReference>
<dbReference type="GO" id="GO:0042744">
    <property type="term" value="P:hydrogen peroxide catabolic process"/>
    <property type="evidence" value="ECO:0000318"/>
    <property type="project" value="GO_Central"/>
</dbReference>
<dbReference type="CDD" id="cd08925">
    <property type="entry name" value="Hb-beta-like"/>
    <property type="match status" value="1"/>
</dbReference>
<dbReference type="FunFam" id="1.10.490.10:FF:000001">
    <property type="entry name" value="Hemoglobin subunit beta"/>
    <property type="match status" value="1"/>
</dbReference>
<dbReference type="Gene3D" id="1.10.490.10">
    <property type="entry name" value="Globins"/>
    <property type="match status" value="1"/>
</dbReference>
<dbReference type="InterPro" id="IPR000971">
    <property type="entry name" value="Globin"/>
</dbReference>
<dbReference type="InterPro" id="IPR009050">
    <property type="entry name" value="Globin-like_sf"/>
</dbReference>
<dbReference type="InterPro" id="IPR012292">
    <property type="entry name" value="Globin/Proto"/>
</dbReference>
<dbReference type="InterPro" id="IPR002337">
    <property type="entry name" value="Hemoglobin_b"/>
</dbReference>
<dbReference type="InterPro" id="IPR050056">
    <property type="entry name" value="Hemoglobin_oxygen_transport"/>
</dbReference>
<dbReference type="PANTHER" id="PTHR11442">
    <property type="entry name" value="HEMOGLOBIN FAMILY MEMBER"/>
    <property type="match status" value="1"/>
</dbReference>
<dbReference type="PANTHER" id="PTHR11442:SF42">
    <property type="entry name" value="HEMOGLOBIN SUBUNIT BETA"/>
    <property type="match status" value="1"/>
</dbReference>
<dbReference type="Pfam" id="PF00042">
    <property type="entry name" value="Globin"/>
    <property type="match status" value="1"/>
</dbReference>
<dbReference type="PRINTS" id="PR00814">
    <property type="entry name" value="BETAHAEM"/>
</dbReference>
<dbReference type="SUPFAM" id="SSF46458">
    <property type="entry name" value="Globin-like"/>
    <property type="match status" value="1"/>
</dbReference>
<dbReference type="PROSITE" id="PS01033">
    <property type="entry name" value="GLOBIN"/>
    <property type="match status" value="1"/>
</dbReference>